<sequence length="210" mass="22781">MKKFLIAPSILSADFARLGEDTANVLAAGGDVVHFDVMDNHYVPNLTIGPMVCEALRNYGITAPIDVHLMVKPVDRIVPDFAKAGASYISFHPEASEHVDRTIQLIKEHGCKAGLVFNPATPLSYLDYVMDKIDVILLMSVNPGFGGQSFIHGTLDKLRQVRKLIDDSGRDIRLEVDGGVKVDNIAEIAAAGADMFVAGSAIFGQPDYRK</sequence>
<accession>P45455</accession>
<dbReference type="EC" id="5.1.3.1" evidence="1"/>
<dbReference type="EMBL" id="X78412">
    <property type="protein sequence ID" value="CAA55178.1"/>
    <property type="molecule type" value="Genomic_DNA"/>
</dbReference>
<dbReference type="PIR" id="S47100">
    <property type="entry name" value="S47100"/>
</dbReference>
<dbReference type="SMR" id="P45455"/>
<dbReference type="STRING" id="273526.SMDB11_3847"/>
<dbReference type="GO" id="GO:0004750">
    <property type="term" value="F:D-ribulose-phosphate 3-epimerase activity"/>
    <property type="evidence" value="ECO:0007669"/>
    <property type="project" value="UniProtKB-UniRule"/>
</dbReference>
<dbReference type="GO" id="GO:0046872">
    <property type="term" value="F:metal ion binding"/>
    <property type="evidence" value="ECO:0007669"/>
    <property type="project" value="UniProtKB-UniRule"/>
</dbReference>
<dbReference type="GO" id="GO:0019323">
    <property type="term" value="P:pentose catabolic process"/>
    <property type="evidence" value="ECO:0007669"/>
    <property type="project" value="UniProtKB-UniRule"/>
</dbReference>
<dbReference type="GO" id="GO:0006098">
    <property type="term" value="P:pentose-phosphate shunt"/>
    <property type="evidence" value="ECO:0007669"/>
    <property type="project" value="InterPro"/>
</dbReference>
<dbReference type="CDD" id="cd00429">
    <property type="entry name" value="RPE"/>
    <property type="match status" value="1"/>
</dbReference>
<dbReference type="FunFam" id="3.20.20.70:FF:000004">
    <property type="entry name" value="Ribulose-phosphate 3-epimerase"/>
    <property type="match status" value="1"/>
</dbReference>
<dbReference type="Gene3D" id="3.20.20.70">
    <property type="entry name" value="Aldolase class I"/>
    <property type="match status" value="1"/>
</dbReference>
<dbReference type="HAMAP" id="MF_02227">
    <property type="entry name" value="RPE"/>
    <property type="match status" value="1"/>
</dbReference>
<dbReference type="InterPro" id="IPR013785">
    <property type="entry name" value="Aldolase_TIM"/>
</dbReference>
<dbReference type="InterPro" id="IPR026019">
    <property type="entry name" value="Ribul_P_3_epim"/>
</dbReference>
<dbReference type="InterPro" id="IPR000056">
    <property type="entry name" value="Ribul_P_3_epim-like"/>
</dbReference>
<dbReference type="InterPro" id="IPR011060">
    <property type="entry name" value="RibuloseP-bd_barrel"/>
</dbReference>
<dbReference type="NCBIfam" id="NF004076">
    <property type="entry name" value="PRK05581.1-4"/>
    <property type="match status" value="1"/>
</dbReference>
<dbReference type="NCBIfam" id="TIGR01163">
    <property type="entry name" value="rpe"/>
    <property type="match status" value="1"/>
</dbReference>
<dbReference type="PANTHER" id="PTHR11749">
    <property type="entry name" value="RIBULOSE-5-PHOSPHATE-3-EPIMERASE"/>
    <property type="match status" value="1"/>
</dbReference>
<dbReference type="Pfam" id="PF00834">
    <property type="entry name" value="Ribul_P_3_epim"/>
    <property type="match status" value="1"/>
</dbReference>
<dbReference type="PIRSF" id="PIRSF001461">
    <property type="entry name" value="RPE"/>
    <property type="match status" value="1"/>
</dbReference>
<dbReference type="SUPFAM" id="SSF51366">
    <property type="entry name" value="Ribulose-phoshate binding barrel"/>
    <property type="match status" value="1"/>
</dbReference>
<dbReference type="PROSITE" id="PS01085">
    <property type="entry name" value="RIBUL_P_3_EPIMER_1"/>
    <property type="match status" value="1"/>
</dbReference>
<dbReference type="PROSITE" id="PS01086">
    <property type="entry name" value="RIBUL_P_3_EPIMER_2"/>
    <property type="match status" value="1"/>
</dbReference>
<reference key="1">
    <citation type="submission" date="1994-06" db="EMBL/GenBank/DDBJ databases">
        <authorList>
            <person name="Ostendorf T."/>
            <person name="Cherepanov P."/>
            <person name="Jekel M."/>
            <person name="de Vries J."/>
            <person name="Wackernagel W."/>
        </authorList>
    </citation>
    <scope>NUCLEOTIDE SEQUENCE [GENOMIC DNA]</scope>
    <source>
        <strain>Sr41</strain>
    </source>
</reference>
<comment type="function">
    <text evidence="1">Catalyzes the reversible epimerization of D-ribulose 5-phosphate to D-xylulose 5-phosphate.</text>
</comment>
<comment type="catalytic activity">
    <reaction evidence="1">
        <text>D-ribulose 5-phosphate = D-xylulose 5-phosphate</text>
        <dbReference type="Rhea" id="RHEA:13677"/>
        <dbReference type="ChEBI" id="CHEBI:57737"/>
        <dbReference type="ChEBI" id="CHEBI:58121"/>
        <dbReference type="EC" id="5.1.3.1"/>
    </reaction>
</comment>
<comment type="cofactor">
    <cofactor evidence="1">
        <name>a divalent metal cation</name>
        <dbReference type="ChEBI" id="CHEBI:60240"/>
    </cofactor>
    <text evidence="1">Binds 1 divalent metal cation per subunit.</text>
</comment>
<comment type="pathway">
    <text evidence="1">Carbohydrate degradation.</text>
</comment>
<comment type="similarity">
    <text evidence="1">Belongs to the ribulose-phosphate 3-epimerase family.</text>
</comment>
<organism>
    <name type="scientific">Serratia marcescens</name>
    <dbReference type="NCBI Taxonomy" id="615"/>
    <lineage>
        <taxon>Bacteria</taxon>
        <taxon>Pseudomonadati</taxon>
        <taxon>Pseudomonadota</taxon>
        <taxon>Gammaproteobacteria</taxon>
        <taxon>Enterobacterales</taxon>
        <taxon>Yersiniaceae</taxon>
        <taxon>Serratia</taxon>
    </lineage>
</organism>
<feature type="chain" id="PRO_0000171579" description="Ribulose-phosphate 3-epimerase">
    <location>
        <begin position="1"/>
        <end position="210"/>
    </location>
</feature>
<feature type="active site" description="Proton acceptor" evidence="1">
    <location>
        <position position="36"/>
    </location>
</feature>
<feature type="active site" description="Proton donor" evidence="1">
    <location>
        <position position="177"/>
    </location>
</feature>
<feature type="binding site" evidence="1">
    <location>
        <position position="9"/>
    </location>
    <ligand>
        <name>substrate</name>
    </ligand>
</feature>
<feature type="binding site" evidence="1">
    <location>
        <position position="34"/>
    </location>
    <ligand>
        <name>a divalent metal cation</name>
        <dbReference type="ChEBI" id="CHEBI:60240"/>
    </ligand>
</feature>
<feature type="binding site" evidence="1">
    <location>
        <position position="36"/>
    </location>
    <ligand>
        <name>a divalent metal cation</name>
        <dbReference type="ChEBI" id="CHEBI:60240"/>
    </ligand>
</feature>
<feature type="binding site" evidence="1">
    <location>
        <position position="68"/>
    </location>
    <ligand>
        <name>a divalent metal cation</name>
        <dbReference type="ChEBI" id="CHEBI:60240"/>
    </ligand>
</feature>
<feature type="binding site" evidence="1">
    <location>
        <position position="68"/>
    </location>
    <ligand>
        <name>substrate</name>
    </ligand>
</feature>
<feature type="binding site" evidence="1">
    <location>
        <begin position="144"/>
        <end position="147"/>
    </location>
    <ligand>
        <name>substrate</name>
    </ligand>
</feature>
<feature type="binding site" evidence="1">
    <location>
        <begin position="177"/>
        <end position="179"/>
    </location>
    <ligand>
        <name>substrate</name>
    </ligand>
</feature>
<feature type="binding site" evidence="1">
    <location>
        <position position="177"/>
    </location>
    <ligand>
        <name>a divalent metal cation</name>
        <dbReference type="ChEBI" id="CHEBI:60240"/>
    </ligand>
</feature>
<feature type="binding site" evidence="1">
    <location>
        <begin position="199"/>
        <end position="200"/>
    </location>
    <ligand>
        <name>substrate</name>
    </ligand>
</feature>
<gene>
    <name evidence="1" type="primary">rpe</name>
    <name type="synonym">dod</name>
</gene>
<name>RPE_SERMA</name>
<proteinExistence type="inferred from homology"/>
<protein>
    <recommendedName>
        <fullName evidence="1">Ribulose-phosphate 3-epimerase</fullName>
        <ecNumber evidence="1">5.1.3.1</ecNumber>
    </recommendedName>
</protein>
<evidence type="ECO:0000255" key="1">
    <source>
        <dbReference type="HAMAP-Rule" id="MF_02227"/>
    </source>
</evidence>
<keyword id="KW-0119">Carbohydrate metabolism</keyword>
<keyword id="KW-0413">Isomerase</keyword>
<keyword id="KW-0479">Metal-binding</keyword>